<evidence type="ECO:0000255" key="1">
    <source>
        <dbReference type="HAMAP-Rule" id="MF_01599"/>
    </source>
</evidence>
<sequence length="524" mass="57119">MTITYTQAFAKNFLGNAPGWYKIAILAFLIINPLVFSLSPFYAGWLLVIEFIFTLAMALKCYPLQPGGLLALEAVFIGMTSPEKIAHEVAANLEVLLLLIFMVAGIYFMKQLLLFVFTKLLLNIRSKIVLSLAFCLAAAFLSAFLDALTVIAVVISVAVGFYGIYHQVASGGGSNVALSDDSLLTDSAKRDALDQFRAFLRSLLMHAGVGTALGGVMTMVGEPQNLIIAKNADWHFVSFLLRMAPVTVPVFCCGILTCYLVERFSLFGYGAQLPDRVRQILLNFDRESTNSRSRQDKLRLMIQALVGVWLVSALAFHLAEVGLIGLSVIVLVTSLCGVTDEHLIGKAFQESLPFTALLTVFFSIVAVIIDQHLFTPVIQFVLQSPPDRQLTLFYLFNGLLSSISDNVFVGTVYIHEAKAALESGAISLKQFELLAVAINTGTNLPSVATPNGQAAFLFLLTSALAPLIRLSYGRMVWMALPYTVVMTLVGLLCVIFTLEPATQLMSQWHLLTLPPAQDVLSSGL</sequence>
<organism>
    <name type="scientific">Edwardsiella ictaluri (strain 93-146)</name>
    <dbReference type="NCBI Taxonomy" id="634503"/>
    <lineage>
        <taxon>Bacteria</taxon>
        <taxon>Pseudomonadati</taxon>
        <taxon>Pseudomonadota</taxon>
        <taxon>Gammaproteobacteria</taxon>
        <taxon>Enterobacterales</taxon>
        <taxon>Hafniaceae</taxon>
        <taxon>Edwardsiella</taxon>
    </lineage>
</organism>
<dbReference type="EMBL" id="CP001600">
    <property type="protein sequence ID" value="ACR68813.1"/>
    <property type="molecule type" value="Genomic_DNA"/>
</dbReference>
<dbReference type="RefSeq" id="WP_015870969.1">
    <property type="nucleotide sequence ID" value="NZ_CP169062.1"/>
</dbReference>
<dbReference type="SMR" id="C5B9W2"/>
<dbReference type="STRING" id="67780.B6E78_01330"/>
<dbReference type="GeneID" id="69538605"/>
<dbReference type="KEGG" id="eic:NT01EI_1629"/>
<dbReference type="PATRIC" id="fig|634503.3.peg.1460"/>
<dbReference type="HOGENOM" id="CLU_041110_0_0_6"/>
<dbReference type="OrthoDB" id="5288732at2"/>
<dbReference type="Proteomes" id="UP000001485">
    <property type="component" value="Chromosome"/>
</dbReference>
<dbReference type="GO" id="GO:0005886">
    <property type="term" value="C:plasma membrane"/>
    <property type="evidence" value="ECO:0007669"/>
    <property type="project" value="UniProtKB-SubCell"/>
</dbReference>
<dbReference type="GO" id="GO:0015385">
    <property type="term" value="F:sodium:proton antiporter activity"/>
    <property type="evidence" value="ECO:0007669"/>
    <property type="project" value="InterPro"/>
</dbReference>
<dbReference type="HAMAP" id="MF_01599">
    <property type="entry name" value="NhaB"/>
    <property type="match status" value="1"/>
</dbReference>
<dbReference type="InterPro" id="IPR004671">
    <property type="entry name" value="Na+/H+_antiporter_NhaB"/>
</dbReference>
<dbReference type="NCBIfam" id="TIGR00774">
    <property type="entry name" value="NhaB"/>
    <property type="match status" value="1"/>
</dbReference>
<dbReference type="NCBIfam" id="NF007093">
    <property type="entry name" value="PRK09547.1"/>
    <property type="match status" value="1"/>
</dbReference>
<dbReference type="PANTHER" id="PTHR43302:SF1">
    <property type="entry name" value="NA(+)_H(+) ANTIPORTER NHAB"/>
    <property type="match status" value="1"/>
</dbReference>
<dbReference type="PANTHER" id="PTHR43302">
    <property type="entry name" value="TRANSPORTER ARSB-RELATED"/>
    <property type="match status" value="1"/>
</dbReference>
<dbReference type="Pfam" id="PF06450">
    <property type="entry name" value="NhaB"/>
    <property type="match status" value="1"/>
</dbReference>
<proteinExistence type="inferred from homology"/>
<gene>
    <name evidence="1" type="primary">nhaB</name>
    <name type="ordered locus">NT01EI_1629</name>
</gene>
<feature type="chain" id="PRO_1000215677" description="Na(+)/H(+) antiporter NhaB">
    <location>
        <begin position="1"/>
        <end position="524"/>
    </location>
</feature>
<feature type="transmembrane region" description="Helical" evidence="1">
    <location>
        <begin position="23"/>
        <end position="43"/>
    </location>
</feature>
<feature type="transmembrane region" description="Helical" evidence="1">
    <location>
        <begin position="44"/>
        <end position="64"/>
    </location>
</feature>
<feature type="transmembrane region" description="Helical" evidence="1">
    <location>
        <begin position="97"/>
        <end position="117"/>
    </location>
</feature>
<feature type="transmembrane region" description="Helical" evidence="1">
    <location>
        <begin position="120"/>
        <end position="140"/>
    </location>
</feature>
<feature type="transmembrane region" description="Helical" evidence="1">
    <location>
        <begin position="144"/>
        <end position="164"/>
    </location>
</feature>
<feature type="transmembrane region" description="Helical" evidence="1">
    <location>
        <begin position="203"/>
        <end position="223"/>
    </location>
</feature>
<feature type="transmembrane region" description="Helical" evidence="1">
    <location>
        <begin position="236"/>
        <end position="256"/>
    </location>
</feature>
<feature type="transmembrane region" description="Helical" evidence="1">
    <location>
        <begin position="304"/>
        <end position="324"/>
    </location>
</feature>
<feature type="transmembrane region" description="Helical" evidence="1">
    <location>
        <begin position="354"/>
        <end position="374"/>
    </location>
</feature>
<feature type="transmembrane region" description="Helical" evidence="1">
    <location>
        <begin position="392"/>
        <end position="412"/>
    </location>
</feature>
<feature type="transmembrane region" description="Helical" evidence="1">
    <location>
        <begin position="448"/>
        <end position="468"/>
    </location>
</feature>
<feature type="transmembrane region" description="Helical" evidence="1">
    <location>
        <begin position="476"/>
        <end position="496"/>
    </location>
</feature>
<name>NHAB_EDWI9</name>
<protein>
    <recommendedName>
        <fullName evidence="1">Na(+)/H(+) antiporter NhaB</fullName>
    </recommendedName>
    <alternativeName>
        <fullName evidence="1">Sodium/proton antiporter NhaB</fullName>
    </alternativeName>
</protein>
<keyword id="KW-0050">Antiport</keyword>
<keyword id="KW-0997">Cell inner membrane</keyword>
<keyword id="KW-1003">Cell membrane</keyword>
<keyword id="KW-0406">Ion transport</keyword>
<keyword id="KW-0472">Membrane</keyword>
<keyword id="KW-0915">Sodium</keyword>
<keyword id="KW-0739">Sodium transport</keyword>
<keyword id="KW-0812">Transmembrane</keyword>
<keyword id="KW-1133">Transmembrane helix</keyword>
<keyword id="KW-0813">Transport</keyword>
<reference key="1">
    <citation type="submission" date="2009-03" db="EMBL/GenBank/DDBJ databases">
        <title>Complete genome sequence of Edwardsiella ictaluri 93-146.</title>
        <authorList>
            <person name="Williams M.L."/>
            <person name="Gillaspy A.F."/>
            <person name="Dyer D.W."/>
            <person name="Thune R.L."/>
            <person name="Waldbieser G.C."/>
            <person name="Schuster S.C."/>
            <person name="Gipson J."/>
            <person name="Zaitshik J."/>
            <person name="Landry C."/>
            <person name="Lawrence M.L."/>
        </authorList>
    </citation>
    <scope>NUCLEOTIDE SEQUENCE [LARGE SCALE GENOMIC DNA]</scope>
    <source>
        <strain>93-146</strain>
    </source>
</reference>
<accession>C5B9W2</accession>
<comment type="function">
    <text evidence="1">Na(+)/H(+) antiporter that extrudes sodium in exchange for external protons.</text>
</comment>
<comment type="catalytic activity">
    <reaction evidence="1">
        <text>2 Na(+)(in) + 3 H(+)(out) = 2 Na(+)(out) + 3 H(+)(in)</text>
        <dbReference type="Rhea" id="RHEA:29247"/>
        <dbReference type="ChEBI" id="CHEBI:15378"/>
        <dbReference type="ChEBI" id="CHEBI:29101"/>
    </reaction>
    <physiologicalReaction direction="left-to-right" evidence="1">
        <dbReference type="Rhea" id="RHEA:29248"/>
    </physiologicalReaction>
</comment>
<comment type="subcellular location">
    <subcellularLocation>
        <location evidence="1">Cell inner membrane</location>
        <topology evidence="1">Multi-pass membrane protein</topology>
    </subcellularLocation>
</comment>
<comment type="similarity">
    <text evidence="1">Belongs to the NhaB Na(+)/H(+) (TC 2.A.34) antiporter family.</text>
</comment>